<name>ISPE_PSEA6</name>
<protein>
    <recommendedName>
        <fullName evidence="1">4-diphosphocytidyl-2-C-methyl-D-erythritol kinase</fullName>
        <shortName evidence="1">CMK</shortName>
        <ecNumber evidence="1">2.7.1.148</ecNumber>
    </recommendedName>
    <alternativeName>
        <fullName evidence="1">4-(cytidine-5'-diphospho)-2-C-methyl-D-erythritol kinase</fullName>
    </alternativeName>
</protein>
<proteinExistence type="inferred from homology"/>
<dbReference type="EC" id="2.7.1.148" evidence="1"/>
<dbReference type="EMBL" id="CP000388">
    <property type="protein sequence ID" value="ABG41082.1"/>
    <property type="molecule type" value="Genomic_DNA"/>
</dbReference>
<dbReference type="RefSeq" id="WP_011575347.1">
    <property type="nucleotide sequence ID" value="NC_008228.1"/>
</dbReference>
<dbReference type="SMR" id="Q15SQ6"/>
<dbReference type="STRING" id="342610.Patl_2566"/>
<dbReference type="KEGG" id="pat:Patl_2566"/>
<dbReference type="eggNOG" id="COG1947">
    <property type="taxonomic scope" value="Bacteria"/>
</dbReference>
<dbReference type="HOGENOM" id="CLU_053057_3_0_6"/>
<dbReference type="OrthoDB" id="9809438at2"/>
<dbReference type="UniPathway" id="UPA00056">
    <property type="reaction ID" value="UER00094"/>
</dbReference>
<dbReference type="Proteomes" id="UP000001981">
    <property type="component" value="Chromosome"/>
</dbReference>
<dbReference type="GO" id="GO:0050515">
    <property type="term" value="F:4-(cytidine 5'-diphospho)-2-C-methyl-D-erythritol kinase activity"/>
    <property type="evidence" value="ECO:0007669"/>
    <property type="project" value="UniProtKB-UniRule"/>
</dbReference>
<dbReference type="GO" id="GO:0005524">
    <property type="term" value="F:ATP binding"/>
    <property type="evidence" value="ECO:0007669"/>
    <property type="project" value="UniProtKB-UniRule"/>
</dbReference>
<dbReference type="GO" id="GO:0019288">
    <property type="term" value="P:isopentenyl diphosphate biosynthetic process, methylerythritol 4-phosphate pathway"/>
    <property type="evidence" value="ECO:0007669"/>
    <property type="project" value="UniProtKB-UniRule"/>
</dbReference>
<dbReference type="GO" id="GO:0016114">
    <property type="term" value="P:terpenoid biosynthetic process"/>
    <property type="evidence" value="ECO:0007669"/>
    <property type="project" value="InterPro"/>
</dbReference>
<dbReference type="Gene3D" id="3.30.230.10">
    <property type="match status" value="1"/>
</dbReference>
<dbReference type="Gene3D" id="3.30.70.890">
    <property type="entry name" value="GHMP kinase, C-terminal domain"/>
    <property type="match status" value="1"/>
</dbReference>
<dbReference type="HAMAP" id="MF_00061">
    <property type="entry name" value="IspE"/>
    <property type="match status" value="1"/>
</dbReference>
<dbReference type="InterPro" id="IPR013750">
    <property type="entry name" value="GHMP_kinase_C_dom"/>
</dbReference>
<dbReference type="InterPro" id="IPR036554">
    <property type="entry name" value="GHMP_kinase_C_sf"/>
</dbReference>
<dbReference type="InterPro" id="IPR006204">
    <property type="entry name" value="GHMP_kinase_N_dom"/>
</dbReference>
<dbReference type="InterPro" id="IPR004424">
    <property type="entry name" value="IspE"/>
</dbReference>
<dbReference type="InterPro" id="IPR020568">
    <property type="entry name" value="Ribosomal_Su5_D2-typ_SF"/>
</dbReference>
<dbReference type="InterPro" id="IPR014721">
    <property type="entry name" value="Ribsml_uS5_D2-typ_fold_subgr"/>
</dbReference>
<dbReference type="NCBIfam" id="TIGR00154">
    <property type="entry name" value="ispE"/>
    <property type="match status" value="1"/>
</dbReference>
<dbReference type="PANTHER" id="PTHR43527">
    <property type="entry name" value="4-DIPHOSPHOCYTIDYL-2-C-METHYL-D-ERYTHRITOL KINASE, CHLOROPLASTIC"/>
    <property type="match status" value="1"/>
</dbReference>
<dbReference type="PANTHER" id="PTHR43527:SF2">
    <property type="entry name" value="4-DIPHOSPHOCYTIDYL-2-C-METHYL-D-ERYTHRITOL KINASE, CHLOROPLASTIC"/>
    <property type="match status" value="1"/>
</dbReference>
<dbReference type="Pfam" id="PF08544">
    <property type="entry name" value="GHMP_kinases_C"/>
    <property type="match status" value="1"/>
</dbReference>
<dbReference type="Pfam" id="PF00288">
    <property type="entry name" value="GHMP_kinases_N"/>
    <property type="match status" value="1"/>
</dbReference>
<dbReference type="PIRSF" id="PIRSF010376">
    <property type="entry name" value="IspE"/>
    <property type="match status" value="1"/>
</dbReference>
<dbReference type="SUPFAM" id="SSF55060">
    <property type="entry name" value="GHMP Kinase, C-terminal domain"/>
    <property type="match status" value="1"/>
</dbReference>
<dbReference type="SUPFAM" id="SSF54211">
    <property type="entry name" value="Ribosomal protein S5 domain 2-like"/>
    <property type="match status" value="1"/>
</dbReference>
<comment type="function">
    <text evidence="1">Catalyzes the phosphorylation of the position 2 hydroxy group of 4-diphosphocytidyl-2C-methyl-D-erythritol.</text>
</comment>
<comment type="catalytic activity">
    <reaction evidence="1">
        <text>4-CDP-2-C-methyl-D-erythritol + ATP = 4-CDP-2-C-methyl-D-erythritol 2-phosphate + ADP + H(+)</text>
        <dbReference type="Rhea" id="RHEA:18437"/>
        <dbReference type="ChEBI" id="CHEBI:15378"/>
        <dbReference type="ChEBI" id="CHEBI:30616"/>
        <dbReference type="ChEBI" id="CHEBI:57823"/>
        <dbReference type="ChEBI" id="CHEBI:57919"/>
        <dbReference type="ChEBI" id="CHEBI:456216"/>
        <dbReference type="EC" id="2.7.1.148"/>
    </reaction>
</comment>
<comment type="pathway">
    <text evidence="1">Isoprenoid biosynthesis; isopentenyl diphosphate biosynthesis via DXP pathway; isopentenyl diphosphate from 1-deoxy-D-xylulose 5-phosphate: step 3/6.</text>
</comment>
<comment type="similarity">
    <text evidence="1">Belongs to the GHMP kinase family. IspE subfamily.</text>
</comment>
<keyword id="KW-0067">ATP-binding</keyword>
<keyword id="KW-0414">Isoprene biosynthesis</keyword>
<keyword id="KW-0418">Kinase</keyword>
<keyword id="KW-0547">Nucleotide-binding</keyword>
<keyword id="KW-0808">Transferase</keyword>
<evidence type="ECO:0000255" key="1">
    <source>
        <dbReference type="HAMAP-Rule" id="MF_00061"/>
    </source>
</evidence>
<feature type="chain" id="PRO_0000335741" description="4-diphosphocytidyl-2-C-methyl-D-erythritol kinase">
    <location>
        <begin position="1"/>
        <end position="286"/>
    </location>
</feature>
<feature type="active site" evidence="1">
    <location>
        <position position="13"/>
    </location>
</feature>
<feature type="active site" evidence="1">
    <location>
        <position position="138"/>
    </location>
</feature>
<feature type="binding site" evidence="1">
    <location>
        <begin position="96"/>
        <end position="106"/>
    </location>
    <ligand>
        <name>ATP</name>
        <dbReference type="ChEBI" id="CHEBI:30616"/>
    </ligand>
</feature>
<accession>Q15SQ6</accession>
<gene>
    <name evidence="1" type="primary">ispE</name>
    <name type="ordered locus">Patl_2566</name>
</gene>
<organism>
    <name type="scientific">Pseudoalteromonas atlantica (strain T6c / ATCC BAA-1087)</name>
    <dbReference type="NCBI Taxonomy" id="3042615"/>
    <lineage>
        <taxon>Bacteria</taxon>
        <taxon>Pseudomonadati</taxon>
        <taxon>Pseudomonadota</taxon>
        <taxon>Gammaproteobacteria</taxon>
        <taxon>Alteromonadales</taxon>
        <taxon>Alteromonadaceae</taxon>
        <taxon>Paraglaciecola</taxon>
    </lineage>
</organism>
<reference key="1">
    <citation type="submission" date="2006-06" db="EMBL/GenBank/DDBJ databases">
        <title>Complete sequence of Pseudoalteromonas atlantica T6c.</title>
        <authorList>
            <consortium name="US DOE Joint Genome Institute"/>
            <person name="Copeland A."/>
            <person name="Lucas S."/>
            <person name="Lapidus A."/>
            <person name="Barry K."/>
            <person name="Detter J.C."/>
            <person name="Glavina del Rio T."/>
            <person name="Hammon N."/>
            <person name="Israni S."/>
            <person name="Dalin E."/>
            <person name="Tice H."/>
            <person name="Pitluck S."/>
            <person name="Saunders E."/>
            <person name="Brettin T."/>
            <person name="Bruce D."/>
            <person name="Han C."/>
            <person name="Tapia R."/>
            <person name="Gilna P."/>
            <person name="Schmutz J."/>
            <person name="Larimer F."/>
            <person name="Land M."/>
            <person name="Hauser L."/>
            <person name="Kyrpides N."/>
            <person name="Kim E."/>
            <person name="Karls A.C."/>
            <person name="Bartlett D."/>
            <person name="Higgins B.P."/>
            <person name="Richardson P."/>
        </authorList>
    </citation>
    <scope>NUCLEOTIDE SEQUENCE [LARGE SCALE GENOMIC DNA]</scope>
    <source>
        <strain>T6c / ATCC BAA-1087</strain>
    </source>
</reference>
<sequence length="286" mass="31080">MDQTIDWWPSPAKLNLFLHINGRYPNGYHQLQSLFQLLDKGDELAFTVTPHAEITLLTPIDGVANEDNLIVKAARLLQTHTGCSEGCDIQLRKVLPMGGGIGGGSSNAATTLIALNYLWKCNLSLTELAELGLALGADVPVFVMGNTAFAQGVGEQLTPVNIAQKHYLVVFPECHVSTAEVFNAPDLPRNTPLISWQEYDFDQTHNDCQQLVCNRFENVANTLRWLLEYAPSRMTGTGACLFAVFTSNQEAENVLANLPSGCSGFVSKGVDVSPVHDKLAHLGSIS</sequence>